<name>HUTG_ALIF1</name>
<reference key="1">
    <citation type="journal article" date="2005" name="Proc. Natl. Acad. Sci. U.S.A.">
        <title>Complete genome sequence of Vibrio fischeri: a symbiotic bacterium with pathogenic congeners.</title>
        <authorList>
            <person name="Ruby E.G."/>
            <person name="Urbanowski M."/>
            <person name="Campbell J."/>
            <person name="Dunn A."/>
            <person name="Faini M."/>
            <person name="Gunsalus R."/>
            <person name="Lostroh P."/>
            <person name="Lupp C."/>
            <person name="McCann J."/>
            <person name="Millikan D."/>
            <person name="Schaefer A."/>
            <person name="Stabb E."/>
            <person name="Stevens A."/>
            <person name="Visick K."/>
            <person name="Whistler C."/>
            <person name="Greenberg E.P."/>
        </authorList>
    </citation>
    <scope>NUCLEOTIDE SEQUENCE [LARGE SCALE GENOMIC DNA]</scope>
    <source>
        <strain>ATCC 700601 / ES114</strain>
    </source>
</reference>
<comment type="function">
    <text evidence="1">Catalyzes the conversion of N-formimidoyl-L-glutamate to L-glutamate and formamide.</text>
</comment>
<comment type="catalytic activity">
    <reaction evidence="1">
        <text>N-formimidoyl-L-glutamate + H2O = formamide + L-glutamate</text>
        <dbReference type="Rhea" id="RHEA:22492"/>
        <dbReference type="ChEBI" id="CHEBI:15377"/>
        <dbReference type="ChEBI" id="CHEBI:16397"/>
        <dbReference type="ChEBI" id="CHEBI:29985"/>
        <dbReference type="ChEBI" id="CHEBI:58928"/>
        <dbReference type="EC" id="3.5.3.8"/>
    </reaction>
</comment>
<comment type="cofactor">
    <cofactor evidence="1">
        <name>Mn(2+)</name>
        <dbReference type="ChEBI" id="CHEBI:29035"/>
    </cofactor>
    <text evidence="1">Binds 2 manganese ions per subunit.</text>
</comment>
<comment type="pathway">
    <text evidence="1">Amino-acid degradation; L-histidine degradation into L-glutamate; L-glutamate from N-formimidoyl-L-glutamate (hydrolase route): step 1/1.</text>
</comment>
<comment type="similarity">
    <text evidence="1">Belongs to the arginase family.</text>
</comment>
<keyword id="KW-0369">Histidine metabolism</keyword>
<keyword id="KW-0378">Hydrolase</keyword>
<keyword id="KW-0464">Manganese</keyword>
<keyword id="KW-0479">Metal-binding</keyword>
<keyword id="KW-1185">Reference proteome</keyword>
<accession>Q5E0C4</accession>
<feature type="chain" id="PRO_0000258269" description="Formimidoylglutamase">
    <location>
        <begin position="1"/>
        <end position="350"/>
    </location>
</feature>
<feature type="binding site" evidence="1">
    <location>
        <position position="130"/>
    </location>
    <ligand>
        <name>Mn(2+)</name>
        <dbReference type="ChEBI" id="CHEBI:29035"/>
        <label>1</label>
    </ligand>
</feature>
<feature type="binding site" evidence="1">
    <location>
        <position position="165"/>
    </location>
    <ligand>
        <name>Mn(2+)</name>
        <dbReference type="ChEBI" id="CHEBI:29035"/>
        <label>1</label>
    </ligand>
</feature>
<feature type="binding site" evidence="1">
    <location>
        <position position="165"/>
    </location>
    <ligand>
        <name>Mn(2+)</name>
        <dbReference type="ChEBI" id="CHEBI:29035"/>
        <label>2</label>
    </ligand>
</feature>
<feature type="binding site" evidence="1">
    <location>
        <position position="167"/>
    </location>
    <ligand>
        <name>Mn(2+)</name>
        <dbReference type="ChEBI" id="CHEBI:29035"/>
        <label>2</label>
    </ligand>
</feature>
<feature type="binding site" evidence="1">
    <location>
        <position position="169"/>
    </location>
    <ligand>
        <name>Mn(2+)</name>
        <dbReference type="ChEBI" id="CHEBI:29035"/>
        <label>1</label>
    </ligand>
</feature>
<feature type="binding site" evidence="1">
    <location>
        <position position="269"/>
    </location>
    <ligand>
        <name>Mn(2+)</name>
        <dbReference type="ChEBI" id="CHEBI:29035"/>
        <label>1</label>
    </ligand>
</feature>
<feature type="binding site" evidence="1">
    <location>
        <position position="269"/>
    </location>
    <ligand>
        <name>Mn(2+)</name>
        <dbReference type="ChEBI" id="CHEBI:29035"/>
        <label>2</label>
    </ligand>
</feature>
<feature type="binding site" evidence="1">
    <location>
        <position position="271"/>
    </location>
    <ligand>
        <name>Mn(2+)</name>
        <dbReference type="ChEBI" id="CHEBI:29035"/>
        <label>2</label>
    </ligand>
</feature>
<organism>
    <name type="scientific">Aliivibrio fischeri (strain ATCC 700601 / ES114)</name>
    <name type="common">Vibrio fischeri</name>
    <dbReference type="NCBI Taxonomy" id="312309"/>
    <lineage>
        <taxon>Bacteria</taxon>
        <taxon>Pseudomonadati</taxon>
        <taxon>Pseudomonadota</taxon>
        <taxon>Gammaproteobacteria</taxon>
        <taxon>Vibrionales</taxon>
        <taxon>Vibrionaceae</taxon>
        <taxon>Aliivibrio</taxon>
    </lineage>
</organism>
<proteinExistence type="inferred from homology"/>
<evidence type="ECO:0000255" key="1">
    <source>
        <dbReference type="HAMAP-Rule" id="MF_00737"/>
    </source>
</evidence>
<protein>
    <recommendedName>
        <fullName evidence="1">Formimidoylglutamase</fullName>
        <ecNumber evidence="1">3.5.3.8</ecNumber>
    </recommendedName>
    <alternativeName>
        <fullName evidence="1">Formiminoglutamase</fullName>
    </alternativeName>
    <alternativeName>
        <fullName evidence="1">Formiminoglutamate hydrolase</fullName>
    </alternativeName>
</protein>
<gene>
    <name evidence="1" type="primary">hutG</name>
    <name type="ordered locus">VF_A0452</name>
</gene>
<dbReference type="EC" id="3.5.3.8" evidence="1"/>
<dbReference type="EMBL" id="CP000021">
    <property type="protein sequence ID" value="AAW87522.1"/>
    <property type="molecule type" value="Genomic_DNA"/>
</dbReference>
<dbReference type="RefSeq" id="YP_206410.1">
    <property type="nucleotide sequence ID" value="NC_006841.2"/>
</dbReference>
<dbReference type="SMR" id="Q5E0C4"/>
<dbReference type="STRING" id="312309.VF_A0452"/>
<dbReference type="EnsemblBacteria" id="AAW87522">
    <property type="protein sequence ID" value="AAW87522"/>
    <property type="gene ID" value="VF_A0452"/>
</dbReference>
<dbReference type="KEGG" id="vfi:VF_A0452"/>
<dbReference type="PATRIC" id="fig|312309.11.peg.3056"/>
<dbReference type="eggNOG" id="COG0010">
    <property type="taxonomic scope" value="Bacteria"/>
</dbReference>
<dbReference type="HOGENOM" id="CLU_039478_2_0_6"/>
<dbReference type="OrthoDB" id="9789727at2"/>
<dbReference type="UniPathway" id="UPA00379">
    <property type="reaction ID" value="UER00552"/>
</dbReference>
<dbReference type="Proteomes" id="UP000000537">
    <property type="component" value="Chromosome II"/>
</dbReference>
<dbReference type="GO" id="GO:0008783">
    <property type="term" value="F:agmatinase activity"/>
    <property type="evidence" value="ECO:0007669"/>
    <property type="project" value="TreeGrafter"/>
</dbReference>
<dbReference type="GO" id="GO:0050415">
    <property type="term" value="F:formimidoylglutamase activity"/>
    <property type="evidence" value="ECO:0007669"/>
    <property type="project" value="UniProtKB-UniRule"/>
</dbReference>
<dbReference type="GO" id="GO:0030145">
    <property type="term" value="F:manganese ion binding"/>
    <property type="evidence" value="ECO:0007669"/>
    <property type="project" value="UniProtKB-UniRule"/>
</dbReference>
<dbReference type="GO" id="GO:0019556">
    <property type="term" value="P:L-histidine catabolic process to glutamate and formamide"/>
    <property type="evidence" value="ECO:0007669"/>
    <property type="project" value="UniProtKB-UniPathway"/>
</dbReference>
<dbReference type="GO" id="GO:0019557">
    <property type="term" value="P:L-histidine catabolic process to glutamate and formate"/>
    <property type="evidence" value="ECO:0007669"/>
    <property type="project" value="UniProtKB-UniPathway"/>
</dbReference>
<dbReference type="GO" id="GO:0033389">
    <property type="term" value="P:putrescine biosynthetic process from arginine, via agmatine"/>
    <property type="evidence" value="ECO:0007669"/>
    <property type="project" value="TreeGrafter"/>
</dbReference>
<dbReference type="CDD" id="cd09988">
    <property type="entry name" value="Formimidoylglutamase"/>
    <property type="match status" value="1"/>
</dbReference>
<dbReference type="Gene3D" id="3.40.800.10">
    <property type="entry name" value="Ureohydrolase domain"/>
    <property type="match status" value="1"/>
</dbReference>
<dbReference type="HAMAP" id="MF_00737">
    <property type="entry name" value="Formimidoylglutam"/>
    <property type="match status" value="1"/>
</dbReference>
<dbReference type="InterPro" id="IPR005923">
    <property type="entry name" value="HutG"/>
</dbReference>
<dbReference type="InterPro" id="IPR006035">
    <property type="entry name" value="Ureohydrolase"/>
</dbReference>
<dbReference type="InterPro" id="IPR023696">
    <property type="entry name" value="Ureohydrolase_dom_sf"/>
</dbReference>
<dbReference type="InterPro" id="IPR020855">
    <property type="entry name" value="Ureohydrolase_Mn_BS"/>
</dbReference>
<dbReference type="NCBIfam" id="TIGR01227">
    <property type="entry name" value="hutG"/>
    <property type="match status" value="1"/>
</dbReference>
<dbReference type="PANTHER" id="PTHR11358">
    <property type="entry name" value="ARGINASE/AGMATINASE"/>
    <property type="match status" value="1"/>
</dbReference>
<dbReference type="PANTHER" id="PTHR11358:SF35">
    <property type="entry name" value="FORMIMIDOYLGLUTAMASE"/>
    <property type="match status" value="1"/>
</dbReference>
<dbReference type="Pfam" id="PF00491">
    <property type="entry name" value="Arginase"/>
    <property type="match status" value="1"/>
</dbReference>
<dbReference type="PIRSF" id="PIRSF036979">
    <property type="entry name" value="Arginase"/>
    <property type="match status" value="1"/>
</dbReference>
<dbReference type="PRINTS" id="PR00116">
    <property type="entry name" value="ARGINASE"/>
</dbReference>
<dbReference type="SUPFAM" id="SSF52768">
    <property type="entry name" value="Arginase/deacetylase"/>
    <property type="match status" value="1"/>
</dbReference>
<dbReference type="PROSITE" id="PS01053">
    <property type="entry name" value="ARGINASE_1"/>
    <property type="match status" value="1"/>
</dbReference>
<dbReference type="PROSITE" id="PS51409">
    <property type="entry name" value="ARGINASE_2"/>
    <property type="match status" value="1"/>
</dbReference>
<sequence length="350" mass="38751">MERSFMKNNSSVNMTSWMGRVDHEDGELGLRWHQKVKVTNSTNQDGIMLLGFACDEGVIRNKGRKGAYAAPQVIRRALANLAWHHQSDVYDGGDIQCNDGDLELAQKQLGIKIKSALANRHQVIVLGGGHEVAWGSFQGIARYLQSRAVLTSPTPPPRIGIINFDAHFDLRNLSQSPSSSASQSSKQYGNSGTPFHQISEFCHVQHWPFHYACLGLNKGSNTQALYHKAKQLGVLHFDDIEMNLLNLPQIKQALSEFIEQNDFLYLTIDIDVFPASCAPGVSAPAVRGVSLDIIESLLPDILKAKNQHGESKLLLADLAEFNPTFDIDNQTARLVARLVWTIAHGMKSNM</sequence>